<organism>
    <name type="scientific">Acinetobacter baumannii (strain ATCC 17978 / DSM 105126 / CIP 53.77 / LMG 1025 / NCDC KC755 / 5377)</name>
    <dbReference type="NCBI Taxonomy" id="400667"/>
    <lineage>
        <taxon>Bacteria</taxon>
        <taxon>Pseudomonadati</taxon>
        <taxon>Pseudomonadota</taxon>
        <taxon>Gammaproteobacteria</taxon>
        <taxon>Moraxellales</taxon>
        <taxon>Moraxellaceae</taxon>
        <taxon>Acinetobacter</taxon>
        <taxon>Acinetobacter calcoaceticus/baumannii complex</taxon>
    </lineage>
</organism>
<keyword id="KW-0687">Ribonucleoprotein</keyword>
<keyword id="KW-0689">Ribosomal protein</keyword>
<keyword id="KW-0694">RNA-binding</keyword>
<keyword id="KW-0699">rRNA-binding</keyword>
<keyword id="KW-0820">tRNA-binding</keyword>
<gene>
    <name evidence="1" type="primary">rpsM</name>
    <name type="ordered locus">A1S_3059</name>
</gene>
<evidence type="ECO:0000255" key="1">
    <source>
        <dbReference type="HAMAP-Rule" id="MF_01315"/>
    </source>
</evidence>
<evidence type="ECO:0000256" key="2">
    <source>
        <dbReference type="SAM" id="MobiDB-lite"/>
    </source>
</evidence>
<evidence type="ECO:0000305" key="3"/>
<accession>A3M962</accession>
<comment type="function">
    <text evidence="1">Located at the top of the head of the 30S subunit, it contacts several helices of the 16S rRNA. In the 70S ribosome it contacts the 23S rRNA (bridge B1a) and protein L5 of the 50S subunit (bridge B1b), connecting the 2 subunits; these bridges are implicated in subunit movement. Contacts the tRNAs in the A and P-sites.</text>
</comment>
<comment type="subunit">
    <text evidence="1">Part of the 30S ribosomal subunit. Forms a loose heterodimer with protein S19. Forms two bridges to the 50S subunit in the 70S ribosome.</text>
</comment>
<comment type="similarity">
    <text evidence="1">Belongs to the universal ribosomal protein uS13 family.</text>
</comment>
<name>RS13_ACIBT</name>
<sequence length="118" mass="13267">MARIAGVNIPDNKHAVISLTYIFGIGRHTAKNILAAVGITETTKIRELDDAQLDAIRAEVAKVPTEGDLRREISMNIKRLMDLGCYRGLRHRRSLPVRGQRTKTNARTRKGPRKPIKK</sequence>
<reference key="1">
    <citation type="journal article" date="2007" name="Genes Dev.">
        <title>New insights into Acinetobacter baumannii pathogenesis revealed by high-density pyrosequencing and transposon mutagenesis.</title>
        <authorList>
            <person name="Smith M.G."/>
            <person name="Gianoulis T.A."/>
            <person name="Pukatzki S."/>
            <person name="Mekalanos J.J."/>
            <person name="Ornston L.N."/>
            <person name="Gerstein M."/>
            <person name="Snyder M."/>
        </authorList>
    </citation>
    <scope>NUCLEOTIDE SEQUENCE [LARGE SCALE GENOMIC DNA]</scope>
    <source>
        <strain>ATCC 17978 / DSM 105126 / CIP 53.77 / LMG 1025 / NCDC KC755 / 5377</strain>
    </source>
</reference>
<feature type="chain" id="PRO_0000306552" description="Small ribosomal subunit protein uS13">
    <location>
        <begin position="1"/>
        <end position="118"/>
    </location>
</feature>
<feature type="region of interest" description="Disordered" evidence="2">
    <location>
        <begin position="92"/>
        <end position="118"/>
    </location>
</feature>
<proteinExistence type="inferred from homology"/>
<protein>
    <recommendedName>
        <fullName evidence="1">Small ribosomal subunit protein uS13</fullName>
    </recommendedName>
    <alternativeName>
        <fullName evidence="3">30S ribosomal protein S13</fullName>
    </alternativeName>
</protein>
<dbReference type="EMBL" id="CP000521">
    <property type="protein sequence ID" value="ABO13456.1"/>
    <property type="molecule type" value="Genomic_DNA"/>
</dbReference>
<dbReference type="RefSeq" id="WP_000090815.1">
    <property type="nucleotide sequence ID" value="NZ_CP053098.1"/>
</dbReference>
<dbReference type="SMR" id="A3M962"/>
<dbReference type="GeneID" id="92895295"/>
<dbReference type="KEGG" id="acb:A1S_3059"/>
<dbReference type="HOGENOM" id="CLU_103849_1_2_6"/>
<dbReference type="GO" id="GO:0005829">
    <property type="term" value="C:cytosol"/>
    <property type="evidence" value="ECO:0007669"/>
    <property type="project" value="TreeGrafter"/>
</dbReference>
<dbReference type="GO" id="GO:0015935">
    <property type="term" value="C:small ribosomal subunit"/>
    <property type="evidence" value="ECO:0007669"/>
    <property type="project" value="TreeGrafter"/>
</dbReference>
<dbReference type="GO" id="GO:0019843">
    <property type="term" value="F:rRNA binding"/>
    <property type="evidence" value="ECO:0007669"/>
    <property type="project" value="UniProtKB-UniRule"/>
</dbReference>
<dbReference type="GO" id="GO:0003735">
    <property type="term" value="F:structural constituent of ribosome"/>
    <property type="evidence" value="ECO:0007669"/>
    <property type="project" value="InterPro"/>
</dbReference>
<dbReference type="GO" id="GO:0000049">
    <property type="term" value="F:tRNA binding"/>
    <property type="evidence" value="ECO:0007669"/>
    <property type="project" value="UniProtKB-UniRule"/>
</dbReference>
<dbReference type="GO" id="GO:0006412">
    <property type="term" value="P:translation"/>
    <property type="evidence" value="ECO:0007669"/>
    <property type="project" value="UniProtKB-UniRule"/>
</dbReference>
<dbReference type="FunFam" id="1.10.8.50:FF:000001">
    <property type="entry name" value="30S ribosomal protein S13"/>
    <property type="match status" value="1"/>
</dbReference>
<dbReference type="FunFam" id="4.10.910.10:FF:000001">
    <property type="entry name" value="30S ribosomal protein S13"/>
    <property type="match status" value="1"/>
</dbReference>
<dbReference type="Gene3D" id="1.10.8.50">
    <property type="match status" value="1"/>
</dbReference>
<dbReference type="Gene3D" id="4.10.910.10">
    <property type="entry name" value="30s ribosomal protein s13, domain 2"/>
    <property type="match status" value="1"/>
</dbReference>
<dbReference type="HAMAP" id="MF_01315">
    <property type="entry name" value="Ribosomal_uS13"/>
    <property type="match status" value="1"/>
</dbReference>
<dbReference type="InterPro" id="IPR027437">
    <property type="entry name" value="Rbsml_uS13_C"/>
</dbReference>
<dbReference type="InterPro" id="IPR001892">
    <property type="entry name" value="Ribosomal_uS13"/>
</dbReference>
<dbReference type="InterPro" id="IPR010979">
    <property type="entry name" value="Ribosomal_uS13-like_H2TH"/>
</dbReference>
<dbReference type="InterPro" id="IPR019980">
    <property type="entry name" value="Ribosomal_uS13_bac-type"/>
</dbReference>
<dbReference type="InterPro" id="IPR018269">
    <property type="entry name" value="Ribosomal_uS13_CS"/>
</dbReference>
<dbReference type="NCBIfam" id="TIGR03631">
    <property type="entry name" value="uS13_bact"/>
    <property type="match status" value="1"/>
</dbReference>
<dbReference type="PANTHER" id="PTHR10871">
    <property type="entry name" value="30S RIBOSOMAL PROTEIN S13/40S RIBOSOMAL PROTEIN S18"/>
    <property type="match status" value="1"/>
</dbReference>
<dbReference type="PANTHER" id="PTHR10871:SF1">
    <property type="entry name" value="SMALL RIBOSOMAL SUBUNIT PROTEIN US13M"/>
    <property type="match status" value="1"/>
</dbReference>
<dbReference type="Pfam" id="PF00416">
    <property type="entry name" value="Ribosomal_S13"/>
    <property type="match status" value="2"/>
</dbReference>
<dbReference type="PIRSF" id="PIRSF002134">
    <property type="entry name" value="Ribosomal_S13"/>
    <property type="match status" value="1"/>
</dbReference>
<dbReference type="SUPFAM" id="SSF46946">
    <property type="entry name" value="S13-like H2TH domain"/>
    <property type="match status" value="1"/>
</dbReference>
<dbReference type="PROSITE" id="PS00646">
    <property type="entry name" value="RIBOSOMAL_S13_1"/>
    <property type="match status" value="1"/>
</dbReference>
<dbReference type="PROSITE" id="PS50159">
    <property type="entry name" value="RIBOSOMAL_S13_2"/>
    <property type="match status" value="1"/>
</dbReference>